<proteinExistence type="inferred from homology"/>
<protein>
    <recommendedName>
        <fullName>Cytochrome P450 1A1</fullName>
        <ecNumber>1.14.14.1</ecNumber>
    </recommendedName>
    <alternativeName>
        <fullName>CYPIA1</fullName>
    </alternativeName>
</protein>
<comment type="function">
    <text>Cytochromes P450 are a group of heme-thiolate monooxygenases. They oxidize a variety of structurally unrelated compounds, including steroids, fatty acids, and xenobiotics.</text>
</comment>
<comment type="catalytic activity">
    <reaction>
        <text>an organic molecule + reduced [NADPH--hemoprotein reductase] + O2 = an alcohol + oxidized [NADPH--hemoprotein reductase] + H2O + H(+)</text>
        <dbReference type="Rhea" id="RHEA:17149"/>
        <dbReference type="Rhea" id="RHEA-COMP:11964"/>
        <dbReference type="Rhea" id="RHEA-COMP:11965"/>
        <dbReference type="ChEBI" id="CHEBI:15377"/>
        <dbReference type="ChEBI" id="CHEBI:15378"/>
        <dbReference type="ChEBI" id="CHEBI:15379"/>
        <dbReference type="ChEBI" id="CHEBI:30879"/>
        <dbReference type="ChEBI" id="CHEBI:57618"/>
        <dbReference type="ChEBI" id="CHEBI:58210"/>
        <dbReference type="ChEBI" id="CHEBI:142491"/>
        <dbReference type="EC" id="1.14.14.1"/>
    </reaction>
</comment>
<comment type="cofactor">
    <cofactor evidence="1">
        <name>heme</name>
        <dbReference type="ChEBI" id="CHEBI:30413"/>
    </cofactor>
</comment>
<comment type="subcellular location">
    <subcellularLocation>
        <location evidence="1">Endoplasmic reticulum membrane</location>
        <topology evidence="1">Peripheral membrane protein</topology>
    </subcellularLocation>
    <subcellularLocation>
        <location evidence="1">Microsome membrane</location>
        <topology evidence="1">Peripheral membrane protein</topology>
    </subcellularLocation>
</comment>
<comment type="similarity">
    <text evidence="2">Belongs to the cytochrome P450 family.</text>
</comment>
<organism>
    <name type="scientific">Oryzias latipes</name>
    <name type="common">Japanese rice fish</name>
    <name type="synonym">Japanese killifish</name>
    <dbReference type="NCBI Taxonomy" id="8090"/>
    <lineage>
        <taxon>Eukaryota</taxon>
        <taxon>Metazoa</taxon>
        <taxon>Chordata</taxon>
        <taxon>Craniata</taxon>
        <taxon>Vertebrata</taxon>
        <taxon>Euteleostomi</taxon>
        <taxon>Actinopterygii</taxon>
        <taxon>Neopterygii</taxon>
        <taxon>Teleostei</taxon>
        <taxon>Neoteleostei</taxon>
        <taxon>Acanthomorphata</taxon>
        <taxon>Ovalentaria</taxon>
        <taxon>Atherinomorphae</taxon>
        <taxon>Beloniformes</taxon>
        <taxon>Adrianichthyidae</taxon>
        <taxon>Oryziinae</taxon>
        <taxon>Oryzias</taxon>
    </lineage>
</organism>
<name>CP1A1_ORYLA</name>
<feature type="chain" id="PRO_0000051644" description="Cytochrome P450 1A1">
    <location>
        <begin position="1"/>
        <end position="521"/>
    </location>
</feature>
<feature type="binding site" evidence="1">
    <location>
        <position position="229"/>
    </location>
    <ligand>
        <name>substrate</name>
    </ligand>
</feature>
<feature type="binding site" description="axial binding residue" evidence="1">
    <location>
        <position position="463"/>
    </location>
    <ligand>
        <name>heme</name>
        <dbReference type="ChEBI" id="CHEBI:30413"/>
    </ligand>
    <ligandPart>
        <name>Fe</name>
        <dbReference type="ChEBI" id="CHEBI:18248"/>
    </ligandPart>
</feature>
<accession>Q6JZS3</accession>
<sequence>MALMVLPFIGPLSVLEGLIALTTVCVVYLLLKHFNKEIPGGLRQLPGPTPLPIIGNLLKLGSKPYLSLTEMSKRFGDVFQIQIGMRPVVVLSGNETVRQALIKQGDDFSGRPDLYSFQFINDGKSLAFSTDQAGVWRARRKLAYSALRSFSSLEGSNAEYSCMLEEHICKETEHLVKEIEKVMKTEGKFDPYRYIVVSVANVICGMCFGRRYDHHDQELVGLVNLSEDFVQVTGSGNPADFIPALRYLPSKAMKKFVEINNRFQSFVQKIVNEHSATYDKDNIRDITDSLIDHCEDRKLDENSNIQMSDEKVVGIVNDLFGAGFDTISTALSWAVGYLVAYPDIEKGLFEEIKENIGLNRNPTISDRSNLPLTDAFILEIFRHSSFLPFTIPHCTTRDTSLNGYYIPKDTCVFINQWQINHDPKLWQDPSSFNPDRFLSEDGSEVNRLDGEKVMVFGLGKRRCIGEVIARNEVFLFLAIMIQKLCFEEMPGEPLDMTPEYGLTMKHKRCNVRASLRLKDGC</sequence>
<evidence type="ECO:0000250" key="1"/>
<evidence type="ECO:0000305" key="2"/>
<dbReference type="EC" id="1.14.14.1"/>
<dbReference type="EMBL" id="AY233000">
    <property type="protein sequence ID" value="AAP68769.1"/>
    <property type="molecule type" value="Genomic_DNA"/>
</dbReference>
<dbReference type="SMR" id="Q6JZS3"/>
<dbReference type="FunCoup" id="Q6JZS3">
    <property type="interactions" value="482"/>
</dbReference>
<dbReference type="STRING" id="8090.ENSORLP00000018073"/>
<dbReference type="eggNOG" id="KOG0156">
    <property type="taxonomic scope" value="Eukaryota"/>
</dbReference>
<dbReference type="InParanoid" id="Q6JZS3"/>
<dbReference type="OrthoDB" id="6507093at2759"/>
<dbReference type="Proteomes" id="UP000001038">
    <property type="component" value="Unplaced"/>
</dbReference>
<dbReference type="Proteomes" id="UP000265180">
    <property type="component" value="Chromosome 9"/>
</dbReference>
<dbReference type="Proteomes" id="UP000265200">
    <property type="component" value="Chromosome 9"/>
</dbReference>
<dbReference type="GO" id="GO:0005789">
    <property type="term" value="C:endoplasmic reticulum membrane"/>
    <property type="evidence" value="ECO:0007669"/>
    <property type="project" value="UniProtKB-SubCell"/>
</dbReference>
<dbReference type="GO" id="GO:0043231">
    <property type="term" value="C:intracellular membrane-bounded organelle"/>
    <property type="evidence" value="ECO:0000318"/>
    <property type="project" value="GO_Central"/>
</dbReference>
<dbReference type="GO" id="GO:0020037">
    <property type="term" value="F:heme binding"/>
    <property type="evidence" value="ECO:0007669"/>
    <property type="project" value="InterPro"/>
</dbReference>
<dbReference type="GO" id="GO:0005506">
    <property type="term" value="F:iron ion binding"/>
    <property type="evidence" value="ECO:0007669"/>
    <property type="project" value="InterPro"/>
</dbReference>
<dbReference type="GO" id="GO:0004497">
    <property type="term" value="F:monooxygenase activity"/>
    <property type="evidence" value="ECO:0000318"/>
    <property type="project" value="GO_Central"/>
</dbReference>
<dbReference type="GO" id="GO:0016712">
    <property type="term" value="F:oxidoreductase activity, acting on paired donors, with incorporation or reduction of molecular oxygen, reduced flavin or flavoprotein as one donor, and incorporation of one atom of oxygen"/>
    <property type="evidence" value="ECO:0007669"/>
    <property type="project" value="UniProtKB-EC"/>
</dbReference>
<dbReference type="CDD" id="cd20676">
    <property type="entry name" value="CYP1A"/>
    <property type="match status" value="1"/>
</dbReference>
<dbReference type="FunFam" id="1.10.630.10:FF:000002">
    <property type="entry name" value="Cytochrome P450 1A1"/>
    <property type="match status" value="1"/>
</dbReference>
<dbReference type="Gene3D" id="1.10.630.10">
    <property type="entry name" value="Cytochrome P450"/>
    <property type="match status" value="1"/>
</dbReference>
<dbReference type="InterPro" id="IPR001128">
    <property type="entry name" value="Cyt_P450"/>
</dbReference>
<dbReference type="InterPro" id="IPR017972">
    <property type="entry name" value="Cyt_P450_CS"/>
</dbReference>
<dbReference type="InterPro" id="IPR002401">
    <property type="entry name" value="Cyt_P450_E_grp-I"/>
</dbReference>
<dbReference type="InterPro" id="IPR008066">
    <property type="entry name" value="Cyt_P450_E_grp-I_CYP1"/>
</dbReference>
<dbReference type="InterPro" id="IPR036396">
    <property type="entry name" value="Cyt_P450_sf"/>
</dbReference>
<dbReference type="PANTHER" id="PTHR24289:SF21">
    <property type="entry name" value="CYTOCHROME P450 1A"/>
    <property type="match status" value="1"/>
</dbReference>
<dbReference type="PANTHER" id="PTHR24289">
    <property type="entry name" value="STEROID 17-ALPHA-HYDROXYLASE/17,20 LYASE"/>
    <property type="match status" value="1"/>
</dbReference>
<dbReference type="Pfam" id="PF00067">
    <property type="entry name" value="p450"/>
    <property type="match status" value="1"/>
</dbReference>
<dbReference type="PRINTS" id="PR00463">
    <property type="entry name" value="EP450I"/>
</dbReference>
<dbReference type="PRINTS" id="PR01683">
    <property type="entry name" value="EP450ICYP1A"/>
</dbReference>
<dbReference type="PRINTS" id="PR00385">
    <property type="entry name" value="P450"/>
</dbReference>
<dbReference type="SUPFAM" id="SSF48264">
    <property type="entry name" value="Cytochrome P450"/>
    <property type="match status" value="1"/>
</dbReference>
<dbReference type="PROSITE" id="PS00086">
    <property type="entry name" value="CYTOCHROME_P450"/>
    <property type="match status" value="1"/>
</dbReference>
<gene>
    <name type="primary">cyp1a1</name>
    <name type="synonym">cyp1a</name>
</gene>
<keyword id="KW-0256">Endoplasmic reticulum</keyword>
<keyword id="KW-0349">Heme</keyword>
<keyword id="KW-0408">Iron</keyword>
<keyword id="KW-0472">Membrane</keyword>
<keyword id="KW-0479">Metal-binding</keyword>
<keyword id="KW-0492">Microsome</keyword>
<keyword id="KW-0503">Monooxygenase</keyword>
<keyword id="KW-0560">Oxidoreductase</keyword>
<keyword id="KW-1185">Reference proteome</keyword>
<reference key="1">
    <citation type="journal article" date="2004" name="Mar. Environ. Res.">
        <title>Cloning of cytochrome P450 1A (CYP1A) genes from the hermaphrodite fish Rivulus marmoratus and the Japanese medaka Oryzias latipes.</title>
        <authorList>
            <person name="Kim I.-C."/>
            <person name="Kim Y.J."/>
            <person name="Yoon Y.-D."/>
            <person name="Kawamura S."/>
            <person name="Lee Y.-S."/>
            <person name="Lee J.-S."/>
        </authorList>
    </citation>
    <scope>NUCLEOTIDE SEQUENCE [GENOMIC DNA]</scope>
</reference>